<dbReference type="EMBL" id="AAFI02000063">
    <property type="protein sequence ID" value="EAL65387.1"/>
    <property type="molecule type" value="Genomic_DNA"/>
</dbReference>
<dbReference type="RefSeq" id="XP_638746.1">
    <property type="nucleotide sequence ID" value="XM_633654.1"/>
</dbReference>
<dbReference type="SMR" id="Q54Q51"/>
<dbReference type="FunCoup" id="Q54Q51">
    <property type="interactions" value="242"/>
</dbReference>
<dbReference type="STRING" id="44689.Q54Q51"/>
<dbReference type="PaxDb" id="44689-DDB0231057"/>
<dbReference type="EnsemblProtists" id="EAL65387">
    <property type="protein sequence ID" value="EAL65387"/>
    <property type="gene ID" value="DDB_G0284093"/>
</dbReference>
<dbReference type="GeneID" id="8624416"/>
<dbReference type="KEGG" id="ddi:DDB_G0284093"/>
<dbReference type="dictyBase" id="DDB_G0284093">
    <property type="gene designation" value="rps16"/>
</dbReference>
<dbReference type="VEuPathDB" id="AmoebaDB:DDB_G0284093"/>
<dbReference type="eggNOG" id="KOG1753">
    <property type="taxonomic scope" value="Eukaryota"/>
</dbReference>
<dbReference type="HOGENOM" id="CLU_046483_4_0_1"/>
<dbReference type="InParanoid" id="Q54Q51"/>
<dbReference type="OMA" id="WPIEMAR"/>
<dbReference type="PhylomeDB" id="Q54Q51"/>
<dbReference type="Reactome" id="R-DDI-156827">
    <property type="pathway name" value="L13a-mediated translational silencing of Ceruloplasmin expression"/>
</dbReference>
<dbReference type="Reactome" id="R-DDI-1799339">
    <property type="pathway name" value="SRP-dependent cotranslational protein targeting to membrane"/>
</dbReference>
<dbReference type="Reactome" id="R-DDI-72689">
    <property type="pathway name" value="Formation of a pool of free 40S subunits"/>
</dbReference>
<dbReference type="Reactome" id="R-DDI-72695">
    <property type="pathway name" value="Formation of the ternary complex, and subsequently, the 43S complex"/>
</dbReference>
<dbReference type="Reactome" id="R-DDI-72702">
    <property type="pathway name" value="Ribosomal scanning and start codon recognition"/>
</dbReference>
<dbReference type="Reactome" id="R-DDI-72706">
    <property type="pathway name" value="GTP hydrolysis and joining of the 60S ribosomal subunit"/>
</dbReference>
<dbReference type="Reactome" id="R-DDI-975956">
    <property type="pathway name" value="Nonsense Mediated Decay (NMD) independent of the Exon Junction Complex (EJC)"/>
</dbReference>
<dbReference type="Reactome" id="R-DDI-975957">
    <property type="pathway name" value="Nonsense Mediated Decay (NMD) enhanced by the Exon Junction Complex (EJC)"/>
</dbReference>
<dbReference type="PRO" id="PR:Q54Q51"/>
<dbReference type="Proteomes" id="UP000002195">
    <property type="component" value="Chromosome 4"/>
</dbReference>
<dbReference type="GO" id="GO:0022627">
    <property type="term" value="C:cytosolic small ribosomal subunit"/>
    <property type="evidence" value="ECO:0000318"/>
    <property type="project" value="GO_Central"/>
</dbReference>
<dbReference type="GO" id="GO:0031012">
    <property type="term" value="C:extracellular matrix"/>
    <property type="evidence" value="ECO:0007005"/>
    <property type="project" value="dictyBase"/>
</dbReference>
<dbReference type="GO" id="GO:0003723">
    <property type="term" value="F:RNA binding"/>
    <property type="evidence" value="ECO:0000318"/>
    <property type="project" value="GO_Central"/>
</dbReference>
<dbReference type="GO" id="GO:0003735">
    <property type="term" value="F:structural constituent of ribosome"/>
    <property type="evidence" value="ECO:0000250"/>
    <property type="project" value="dictyBase"/>
</dbReference>
<dbReference type="GO" id="GO:0000462">
    <property type="term" value="P:maturation of SSU-rRNA from tricistronic rRNA transcript (SSU-rRNA, 5.8S rRNA, LSU-rRNA)"/>
    <property type="evidence" value="ECO:0000318"/>
    <property type="project" value="GO_Central"/>
</dbReference>
<dbReference type="GO" id="GO:0006412">
    <property type="term" value="P:translation"/>
    <property type="evidence" value="ECO:0000250"/>
    <property type="project" value="dictyBase"/>
</dbReference>
<dbReference type="FunFam" id="3.30.230.10:FF:000007">
    <property type="entry name" value="40S ribosomal protein S16"/>
    <property type="match status" value="1"/>
</dbReference>
<dbReference type="Gene3D" id="3.30.230.10">
    <property type="match status" value="1"/>
</dbReference>
<dbReference type="InterPro" id="IPR020568">
    <property type="entry name" value="Ribosomal_Su5_D2-typ_SF"/>
</dbReference>
<dbReference type="InterPro" id="IPR000754">
    <property type="entry name" value="Ribosomal_uS9"/>
</dbReference>
<dbReference type="InterPro" id="IPR020574">
    <property type="entry name" value="Ribosomal_uS9_CS"/>
</dbReference>
<dbReference type="InterPro" id="IPR014721">
    <property type="entry name" value="Ribsml_uS5_D2-typ_fold_subgr"/>
</dbReference>
<dbReference type="NCBIfam" id="NF001749">
    <property type="entry name" value="PRK00474.1"/>
    <property type="match status" value="1"/>
</dbReference>
<dbReference type="PANTHER" id="PTHR21569:SF16">
    <property type="entry name" value="RIBOSOMAL PROTEIN S16"/>
    <property type="match status" value="1"/>
</dbReference>
<dbReference type="PANTHER" id="PTHR21569">
    <property type="entry name" value="RIBOSOMAL PROTEIN S9"/>
    <property type="match status" value="1"/>
</dbReference>
<dbReference type="Pfam" id="PF00380">
    <property type="entry name" value="Ribosomal_S9"/>
    <property type="match status" value="1"/>
</dbReference>
<dbReference type="SUPFAM" id="SSF54211">
    <property type="entry name" value="Ribosomal protein S5 domain 2-like"/>
    <property type="match status" value="1"/>
</dbReference>
<dbReference type="PROSITE" id="PS00360">
    <property type="entry name" value="RIBOSOMAL_S9"/>
    <property type="match status" value="1"/>
</dbReference>
<feature type="chain" id="PRO_0000323425" description="Small ribosomal subunit protein uS9">
    <location>
        <begin position="1"/>
        <end position="147"/>
    </location>
</feature>
<evidence type="ECO:0000305" key="1"/>
<accession>Q54Q51</accession>
<organism>
    <name type="scientific">Dictyostelium discoideum</name>
    <name type="common">Social amoeba</name>
    <dbReference type="NCBI Taxonomy" id="44689"/>
    <lineage>
        <taxon>Eukaryota</taxon>
        <taxon>Amoebozoa</taxon>
        <taxon>Evosea</taxon>
        <taxon>Eumycetozoa</taxon>
        <taxon>Dictyostelia</taxon>
        <taxon>Dictyosteliales</taxon>
        <taxon>Dictyosteliaceae</taxon>
        <taxon>Dictyostelium</taxon>
    </lineage>
</organism>
<comment type="similarity">
    <text evidence="1">Belongs to the universal ribosomal protein uS9 family.</text>
</comment>
<protein>
    <recommendedName>
        <fullName evidence="1">Small ribosomal subunit protein uS9</fullName>
    </recommendedName>
    <alternativeName>
        <fullName>40S ribosomal protein S16</fullName>
    </alternativeName>
</protein>
<gene>
    <name type="primary">rps16</name>
    <name type="ORF">DDB_G0284093</name>
</gene>
<keyword id="KW-1185">Reference proteome</keyword>
<keyword id="KW-0687">Ribonucleoprotein</keyword>
<keyword id="KW-0689">Ribosomal protein</keyword>
<sequence>MSAVAPQKNVVQTHGKKRTAVAVAYATNGKGLIKVNGVPLEFIQPKNLKLKVYEPVLIVGKDVFSQVDIRVRVRGGGSVAQIYAIRQAIAKSIVAYHQKYVDEESKNEIKKKILDYDRSLLVADPRRCEPKKFGGRGARARFQKSYR</sequence>
<reference key="1">
    <citation type="journal article" date="2005" name="Nature">
        <title>The genome of the social amoeba Dictyostelium discoideum.</title>
        <authorList>
            <person name="Eichinger L."/>
            <person name="Pachebat J.A."/>
            <person name="Gloeckner G."/>
            <person name="Rajandream M.A."/>
            <person name="Sucgang R."/>
            <person name="Berriman M."/>
            <person name="Song J."/>
            <person name="Olsen R."/>
            <person name="Szafranski K."/>
            <person name="Xu Q."/>
            <person name="Tunggal B."/>
            <person name="Kummerfeld S."/>
            <person name="Madera M."/>
            <person name="Konfortov B.A."/>
            <person name="Rivero F."/>
            <person name="Bankier A.T."/>
            <person name="Lehmann R."/>
            <person name="Hamlin N."/>
            <person name="Davies R."/>
            <person name="Gaudet P."/>
            <person name="Fey P."/>
            <person name="Pilcher K."/>
            <person name="Chen G."/>
            <person name="Saunders D."/>
            <person name="Sodergren E.J."/>
            <person name="Davis P."/>
            <person name="Kerhornou A."/>
            <person name="Nie X."/>
            <person name="Hall N."/>
            <person name="Anjard C."/>
            <person name="Hemphill L."/>
            <person name="Bason N."/>
            <person name="Farbrother P."/>
            <person name="Desany B."/>
            <person name="Just E."/>
            <person name="Morio T."/>
            <person name="Rost R."/>
            <person name="Churcher C.M."/>
            <person name="Cooper J."/>
            <person name="Haydock S."/>
            <person name="van Driessche N."/>
            <person name="Cronin A."/>
            <person name="Goodhead I."/>
            <person name="Muzny D.M."/>
            <person name="Mourier T."/>
            <person name="Pain A."/>
            <person name="Lu M."/>
            <person name="Harper D."/>
            <person name="Lindsay R."/>
            <person name="Hauser H."/>
            <person name="James K.D."/>
            <person name="Quiles M."/>
            <person name="Madan Babu M."/>
            <person name="Saito T."/>
            <person name="Buchrieser C."/>
            <person name="Wardroper A."/>
            <person name="Felder M."/>
            <person name="Thangavelu M."/>
            <person name="Johnson D."/>
            <person name="Knights A."/>
            <person name="Loulseged H."/>
            <person name="Mungall K.L."/>
            <person name="Oliver K."/>
            <person name="Price C."/>
            <person name="Quail M.A."/>
            <person name="Urushihara H."/>
            <person name="Hernandez J."/>
            <person name="Rabbinowitsch E."/>
            <person name="Steffen D."/>
            <person name="Sanders M."/>
            <person name="Ma J."/>
            <person name="Kohara Y."/>
            <person name="Sharp S."/>
            <person name="Simmonds M.N."/>
            <person name="Spiegler S."/>
            <person name="Tivey A."/>
            <person name="Sugano S."/>
            <person name="White B."/>
            <person name="Walker D."/>
            <person name="Woodward J.R."/>
            <person name="Winckler T."/>
            <person name="Tanaka Y."/>
            <person name="Shaulsky G."/>
            <person name="Schleicher M."/>
            <person name="Weinstock G.M."/>
            <person name="Rosenthal A."/>
            <person name="Cox E.C."/>
            <person name="Chisholm R.L."/>
            <person name="Gibbs R.A."/>
            <person name="Loomis W.F."/>
            <person name="Platzer M."/>
            <person name="Kay R.R."/>
            <person name="Williams J.G."/>
            <person name="Dear P.H."/>
            <person name="Noegel A.A."/>
            <person name="Barrell B.G."/>
            <person name="Kuspa A."/>
        </authorList>
    </citation>
    <scope>NUCLEOTIDE SEQUENCE [LARGE SCALE GENOMIC DNA]</scope>
    <source>
        <strain>AX4</strain>
    </source>
</reference>
<proteinExistence type="inferred from homology"/>
<name>RS16_DICDI</name>